<dbReference type="EC" id="2.3.1.180" evidence="1"/>
<dbReference type="EMBL" id="CP000947">
    <property type="protein sequence ID" value="ACA31952.1"/>
    <property type="molecule type" value="Genomic_DNA"/>
</dbReference>
<dbReference type="RefSeq" id="WP_012341181.1">
    <property type="nucleotide sequence ID" value="NC_010519.1"/>
</dbReference>
<dbReference type="SMR" id="B0UUZ0"/>
<dbReference type="STRING" id="228400.HSM_0032"/>
<dbReference type="GeneID" id="31486307"/>
<dbReference type="KEGG" id="hsm:HSM_0032"/>
<dbReference type="HOGENOM" id="CLU_039592_3_1_6"/>
<dbReference type="UniPathway" id="UPA00094"/>
<dbReference type="GO" id="GO:0005737">
    <property type="term" value="C:cytoplasm"/>
    <property type="evidence" value="ECO:0007669"/>
    <property type="project" value="UniProtKB-SubCell"/>
</dbReference>
<dbReference type="GO" id="GO:0004315">
    <property type="term" value="F:3-oxoacyl-[acyl-carrier-protein] synthase activity"/>
    <property type="evidence" value="ECO:0007669"/>
    <property type="project" value="InterPro"/>
</dbReference>
<dbReference type="GO" id="GO:0033818">
    <property type="term" value="F:beta-ketoacyl-acyl-carrier-protein synthase III activity"/>
    <property type="evidence" value="ECO:0007669"/>
    <property type="project" value="UniProtKB-UniRule"/>
</dbReference>
<dbReference type="GO" id="GO:0006633">
    <property type="term" value="P:fatty acid biosynthetic process"/>
    <property type="evidence" value="ECO:0007669"/>
    <property type="project" value="UniProtKB-UniRule"/>
</dbReference>
<dbReference type="GO" id="GO:0044550">
    <property type="term" value="P:secondary metabolite biosynthetic process"/>
    <property type="evidence" value="ECO:0007669"/>
    <property type="project" value="TreeGrafter"/>
</dbReference>
<dbReference type="CDD" id="cd00830">
    <property type="entry name" value="KAS_III"/>
    <property type="match status" value="1"/>
</dbReference>
<dbReference type="FunFam" id="3.40.47.10:FF:000004">
    <property type="entry name" value="3-oxoacyl-[acyl-carrier-protein] synthase 3"/>
    <property type="match status" value="1"/>
</dbReference>
<dbReference type="Gene3D" id="3.40.47.10">
    <property type="match status" value="2"/>
</dbReference>
<dbReference type="HAMAP" id="MF_01815">
    <property type="entry name" value="FabH"/>
    <property type="match status" value="1"/>
</dbReference>
<dbReference type="InterPro" id="IPR013747">
    <property type="entry name" value="ACP_syn_III_C"/>
</dbReference>
<dbReference type="InterPro" id="IPR013751">
    <property type="entry name" value="ACP_syn_III_N"/>
</dbReference>
<dbReference type="InterPro" id="IPR004655">
    <property type="entry name" value="FabH"/>
</dbReference>
<dbReference type="InterPro" id="IPR016039">
    <property type="entry name" value="Thiolase-like"/>
</dbReference>
<dbReference type="NCBIfam" id="TIGR00747">
    <property type="entry name" value="fabH"/>
    <property type="match status" value="1"/>
</dbReference>
<dbReference type="NCBIfam" id="NF006829">
    <property type="entry name" value="PRK09352.1"/>
    <property type="match status" value="1"/>
</dbReference>
<dbReference type="PANTHER" id="PTHR34069">
    <property type="entry name" value="3-OXOACYL-[ACYL-CARRIER-PROTEIN] SYNTHASE 3"/>
    <property type="match status" value="1"/>
</dbReference>
<dbReference type="PANTHER" id="PTHR34069:SF2">
    <property type="entry name" value="BETA-KETOACYL-[ACYL-CARRIER-PROTEIN] SYNTHASE III"/>
    <property type="match status" value="1"/>
</dbReference>
<dbReference type="Pfam" id="PF08545">
    <property type="entry name" value="ACP_syn_III"/>
    <property type="match status" value="1"/>
</dbReference>
<dbReference type="Pfam" id="PF08541">
    <property type="entry name" value="ACP_syn_III_C"/>
    <property type="match status" value="1"/>
</dbReference>
<dbReference type="SUPFAM" id="SSF53901">
    <property type="entry name" value="Thiolase-like"/>
    <property type="match status" value="1"/>
</dbReference>
<reference key="1">
    <citation type="submission" date="2008-02" db="EMBL/GenBank/DDBJ databases">
        <title>Complete sequence of Haemophilus somnus 2336.</title>
        <authorList>
            <consortium name="US DOE Joint Genome Institute"/>
            <person name="Siddaramappa S."/>
            <person name="Duncan A.J."/>
            <person name="Challacombe J.F."/>
            <person name="Rainey D."/>
            <person name="Gillaspy A.F."/>
            <person name="Carson M."/>
            <person name="Gipson J."/>
            <person name="Gipson M."/>
            <person name="Bruce D."/>
            <person name="Detter J.C."/>
            <person name="Han C.S."/>
            <person name="Land M."/>
            <person name="Tapia R."/>
            <person name="Thompson L.S."/>
            <person name="Orvis J."/>
            <person name="Zaitshik J."/>
            <person name="Barnes G."/>
            <person name="Brettin T.S."/>
            <person name="Dyer D.W."/>
            <person name="Inzana T.J."/>
        </authorList>
    </citation>
    <scope>NUCLEOTIDE SEQUENCE [LARGE SCALE GENOMIC DNA]</scope>
    <source>
        <strain>2336</strain>
    </source>
</reference>
<organism>
    <name type="scientific">Histophilus somni (strain 2336)</name>
    <name type="common">Haemophilus somnus</name>
    <dbReference type="NCBI Taxonomy" id="228400"/>
    <lineage>
        <taxon>Bacteria</taxon>
        <taxon>Pseudomonadati</taxon>
        <taxon>Pseudomonadota</taxon>
        <taxon>Gammaproteobacteria</taxon>
        <taxon>Pasteurellales</taxon>
        <taxon>Pasteurellaceae</taxon>
        <taxon>Histophilus</taxon>
    </lineage>
</organism>
<evidence type="ECO:0000255" key="1">
    <source>
        <dbReference type="HAMAP-Rule" id="MF_01815"/>
    </source>
</evidence>
<proteinExistence type="inferred from homology"/>
<sequence length="316" mass="34232">MYSRILATGSYIPANIRTNADLEKMVETSDEWITTRSGIKERRIAGENETVATMGFEAAKNALQLANICPNDIDLVLVATTSHSYAYPSAACQIQGMLDIDDAISFDLAAACTGFIYALSVADQFIKTGKVKKALVIGADINSRKLDETDRSTVILFGDGAGAVILESSDIEGIISTHLHASLDKSNALILPQTQQGEVQSGYIQMQGNATFKLAVRELSNVVEETLRDNHLDKADLDWLVPHQANLRIITATAEKLNMSLDQVVITLDKYGNTSAATVPVALDEAVRDGRIKRGQLLLLEAFGGGWTWGSALVRF</sequence>
<protein>
    <recommendedName>
        <fullName evidence="1">Beta-ketoacyl-[acyl-carrier-protein] synthase III</fullName>
        <shortName evidence="1">Beta-ketoacyl-ACP synthase III</shortName>
        <shortName evidence="1">KAS III</shortName>
        <ecNumber evidence="1">2.3.1.180</ecNumber>
    </recommendedName>
    <alternativeName>
        <fullName evidence="1">3-oxoacyl-[acyl-carrier-protein] synthase 3</fullName>
    </alternativeName>
    <alternativeName>
        <fullName evidence="1">3-oxoacyl-[acyl-carrier-protein] synthase III</fullName>
    </alternativeName>
</protein>
<gene>
    <name evidence="1" type="primary">fabH</name>
    <name type="ordered locus">HSM_0032</name>
</gene>
<accession>B0UUZ0</accession>
<feature type="chain" id="PRO_1000088313" description="Beta-ketoacyl-[acyl-carrier-protein] synthase III">
    <location>
        <begin position="1"/>
        <end position="316"/>
    </location>
</feature>
<feature type="region of interest" description="ACP-binding" evidence="1">
    <location>
        <begin position="244"/>
        <end position="248"/>
    </location>
</feature>
<feature type="active site" evidence="1">
    <location>
        <position position="112"/>
    </location>
</feature>
<feature type="active site" evidence="1">
    <location>
        <position position="243"/>
    </location>
</feature>
<feature type="active site" evidence="1">
    <location>
        <position position="273"/>
    </location>
</feature>
<keyword id="KW-0012">Acyltransferase</keyword>
<keyword id="KW-0963">Cytoplasm</keyword>
<keyword id="KW-0275">Fatty acid biosynthesis</keyword>
<keyword id="KW-0276">Fatty acid metabolism</keyword>
<keyword id="KW-0444">Lipid biosynthesis</keyword>
<keyword id="KW-0443">Lipid metabolism</keyword>
<keyword id="KW-0511">Multifunctional enzyme</keyword>
<keyword id="KW-0808">Transferase</keyword>
<comment type="function">
    <text evidence="1">Catalyzes the condensation reaction of fatty acid synthesis by the addition to an acyl acceptor of two carbons from malonyl-ACP. Catalyzes the first condensation reaction which initiates fatty acid synthesis and may therefore play a role in governing the total rate of fatty acid production. Possesses both acetoacetyl-ACP synthase and acetyl transacylase activities. Its substrate specificity determines the biosynthesis of branched-chain and/or straight-chain of fatty acids.</text>
</comment>
<comment type="catalytic activity">
    <reaction evidence="1">
        <text>malonyl-[ACP] + acetyl-CoA + H(+) = 3-oxobutanoyl-[ACP] + CO2 + CoA</text>
        <dbReference type="Rhea" id="RHEA:12080"/>
        <dbReference type="Rhea" id="RHEA-COMP:9623"/>
        <dbReference type="Rhea" id="RHEA-COMP:9625"/>
        <dbReference type="ChEBI" id="CHEBI:15378"/>
        <dbReference type="ChEBI" id="CHEBI:16526"/>
        <dbReference type="ChEBI" id="CHEBI:57287"/>
        <dbReference type="ChEBI" id="CHEBI:57288"/>
        <dbReference type="ChEBI" id="CHEBI:78449"/>
        <dbReference type="ChEBI" id="CHEBI:78450"/>
        <dbReference type="EC" id="2.3.1.180"/>
    </reaction>
</comment>
<comment type="pathway">
    <text evidence="1">Lipid metabolism; fatty acid biosynthesis.</text>
</comment>
<comment type="subunit">
    <text evidence="1">Homodimer.</text>
</comment>
<comment type="subcellular location">
    <subcellularLocation>
        <location evidence="1">Cytoplasm</location>
    </subcellularLocation>
</comment>
<comment type="domain">
    <text evidence="1">The last Arg residue of the ACP-binding site is essential for the weak association between ACP/AcpP and FabH.</text>
</comment>
<comment type="similarity">
    <text evidence="1">Belongs to the thiolase-like superfamily. FabH family.</text>
</comment>
<name>FABH_HISS2</name>